<feature type="chain" id="PRO_0000171847" description="Putative membrane protein insertion efficiency factor">
    <location>
        <begin position="1"/>
        <end position="86"/>
    </location>
</feature>
<gene>
    <name type="ordered locus">PM1164</name>
</gene>
<comment type="function">
    <text evidence="1">Could be involved in insertion of integral membrane proteins into the membrane.</text>
</comment>
<comment type="subcellular location">
    <subcellularLocation>
        <location evidence="1">Cell inner membrane</location>
        <topology evidence="1">Peripheral membrane protein</topology>
        <orientation evidence="1">Cytoplasmic side</orientation>
    </subcellularLocation>
</comment>
<comment type="similarity">
    <text evidence="1">Belongs to the UPF0161 family.</text>
</comment>
<protein>
    <recommendedName>
        <fullName evidence="1">Putative membrane protein insertion efficiency factor</fullName>
    </recommendedName>
</protein>
<reference key="1">
    <citation type="journal article" date="2001" name="Proc. Natl. Acad. Sci. U.S.A.">
        <title>Complete genomic sequence of Pasteurella multocida Pm70.</title>
        <authorList>
            <person name="May B.J."/>
            <person name="Zhang Q."/>
            <person name="Li L.L."/>
            <person name="Paustian M.L."/>
            <person name="Whittam T.S."/>
            <person name="Kapur V."/>
        </authorList>
    </citation>
    <scope>NUCLEOTIDE SEQUENCE [LARGE SCALE GENOMIC DNA]</scope>
    <source>
        <strain>Pm70</strain>
    </source>
</reference>
<name>YIDD_PASMU</name>
<organism>
    <name type="scientific">Pasteurella multocida (strain Pm70)</name>
    <dbReference type="NCBI Taxonomy" id="272843"/>
    <lineage>
        <taxon>Bacteria</taxon>
        <taxon>Pseudomonadati</taxon>
        <taxon>Pseudomonadota</taxon>
        <taxon>Gammaproteobacteria</taxon>
        <taxon>Pasteurellales</taxon>
        <taxon>Pasteurellaceae</taxon>
        <taxon>Pasteurella</taxon>
    </lineage>
</organism>
<proteinExistence type="inferred from homology"/>
<evidence type="ECO:0000255" key="1">
    <source>
        <dbReference type="HAMAP-Rule" id="MF_00386"/>
    </source>
</evidence>
<keyword id="KW-0997">Cell inner membrane</keyword>
<keyword id="KW-1003">Cell membrane</keyword>
<keyword id="KW-0472">Membrane</keyword>
<keyword id="KW-1185">Reference proteome</keyword>
<dbReference type="EMBL" id="AE004439">
    <property type="protein sequence ID" value="AAK03248.1"/>
    <property type="molecule type" value="Genomic_DNA"/>
</dbReference>
<dbReference type="STRING" id="272843.PM1164"/>
<dbReference type="EnsemblBacteria" id="AAK03248">
    <property type="protein sequence ID" value="AAK03248"/>
    <property type="gene ID" value="PM1164"/>
</dbReference>
<dbReference type="KEGG" id="pmu:PM1164"/>
<dbReference type="HOGENOM" id="CLU_144811_5_2_6"/>
<dbReference type="OrthoDB" id="9801753at2"/>
<dbReference type="Proteomes" id="UP000000809">
    <property type="component" value="Chromosome"/>
</dbReference>
<dbReference type="GO" id="GO:0005886">
    <property type="term" value="C:plasma membrane"/>
    <property type="evidence" value="ECO:0007669"/>
    <property type="project" value="UniProtKB-SubCell"/>
</dbReference>
<dbReference type="HAMAP" id="MF_00386">
    <property type="entry name" value="UPF0161_YidD"/>
    <property type="match status" value="1"/>
</dbReference>
<dbReference type="InterPro" id="IPR002696">
    <property type="entry name" value="Membr_insert_effic_factor_YidD"/>
</dbReference>
<dbReference type="NCBIfam" id="TIGR00278">
    <property type="entry name" value="membrane protein insertion efficiency factor YidD"/>
    <property type="match status" value="1"/>
</dbReference>
<dbReference type="PANTHER" id="PTHR33383">
    <property type="entry name" value="MEMBRANE PROTEIN INSERTION EFFICIENCY FACTOR-RELATED"/>
    <property type="match status" value="1"/>
</dbReference>
<dbReference type="PANTHER" id="PTHR33383:SF1">
    <property type="entry name" value="MEMBRANE PROTEIN INSERTION EFFICIENCY FACTOR-RELATED"/>
    <property type="match status" value="1"/>
</dbReference>
<dbReference type="Pfam" id="PF01809">
    <property type="entry name" value="YidD"/>
    <property type="match status" value="1"/>
</dbReference>
<dbReference type="SMART" id="SM01234">
    <property type="entry name" value="Haemolytic"/>
    <property type="match status" value="1"/>
</dbReference>
<sequence length="86" mass="9485">MAKTHSLSSKILIGLIRVYQVVISPLIGPRCRFTPTCSCYGIEAVKTHGAIKGSWLTLKRILKCHPLNAGGYDPVPPKINNKKEKK</sequence>
<accession>Q9CLQ3</accession>